<comment type="function">
    <text evidence="1">Catalyzes the transfer of a phosphate group to glutamate to form L-glutamate 5-phosphate.</text>
</comment>
<comment type="catalytic activity">
    <reaction evidence="1">
        <text>L-glutamate + ATP = L-glutamyl 5-phosphate + ADP</text>
        <dbReference type="Rhea" id="RHEA:14877"/>
        <dbReference type="ChEBI" id="CHEBI:29985"/>
        <dbReference type="ChEBI" id="CHEBI:30616"/>
        <dbReference type="ChEBI" id="CHEBI:58274"/>
        <dbReference type="ChEBI" id="CHEBI:456216"/>
        <dbReference type="EC" id="2.7.2.11"/>
    </reaction>
</comment>
<comment type="pathway">
    <text evidence="1">Amino-acid biosynthesis; L-proline biosynthesis; L-glutamate 5-semialdehyde from L-glutamate: step 1/2.</text>
</comment>
<comment type="subcellular location">
    <subcellularLocation>
        <location evidence="1">Cytoplasm</location>
    </subcellularLocation>
</comment>
<comment type="similarity">
    <text evidence="1">Belongs to the glutamate 5-kinase family.</text>
</comment>
<comment type="sequence caution" evidence="2">
    <conflict type="erroneous initiation">
        <sequence resource="EMBL-CDS" id="AAT87554"/>
    </conflict>
</comment>
<sequence>MMKRQFEDVTRIVIKIGTSSLVLPTGKINLEKIDQLAFVISSLMNKGKEVILVSSGAMGFGLDILKMEKRPTNLAKQQAVSSVGQVAMMSLYSQIFAHYQTNVSQILLTRDVVVFPESLANVTNAFESLISLGIVPIVNENDAVSVDEMDHATKFGDNDRLSAVVAGITKADLLIMLSDIDGLFDKNPTIYEDAQLRSHVAVITQEIIASAGGAGSKFGTGGMLSKVQSAQMVFENKGQMVLMNGANPRDVLRVLEGQPLGTWFKQIEEVTHD</sequence>
<organism>
    <name type="scientific">Streptococcus pyogenes serotype M6 (strain ATCC BAA-946 / MGAS10394)</name>
    <dbReference type="NCBI Taxonomy" id="286636"/>
    <lineage>
        <taxon>Bacteria</taxon>
        <taxon>Bacillati</taxon>
        <taxon>Bacillota</taxon>
        <taxon>Bacilli</taxon>
        <taxon>Lactobacillales</taxon>
        <taxon>Streptococcaceae</taxon>
        <taxon>Streptococcus</taxon>
    </lineage>
</organism>
<dbReference type="EC" id="2.7.2.11" evidence="1"/>
<dbReference type="EMBL" id="CP000003">
    <property type="protein sequence ID" value="AAT87554.1"/>
    <property type="status" value="ALT_INIT"/>
    <property type="molecule type" value="Genomic_DNA"/>
</dbReference>
<dbReference type="RefSeq" id="WP_021340564.1">
    <property type="nucleotide sequence ID" value="NC_006086.1"/>
</dbReference>
<dbReference type="SMR" id="Q5XAK9"/>
<dbReference type="KEGG" id="spa:M6_Spy1419"/>
<dbReference type="HOGENOM" id="CLU_025400_0_2_9"/>
<dbReference type="UniPathway" id="UPA00098">
    <property type="reaction ID" value="UER00359"/>
</dbReference>
<dbReference type="Proteomes" id="UP000001167">
    <property type="component" value="Chromosome"/>
</dbReference>
<dbReference type="GO" id="GO:0005829">
    <property type="term" value="C:cytosol"/>
    <property type="evidence" value="ECO:0007669"/>
    <property type="project" value="TreeGrafter"/>
</dbReference>
<dbReference type="GO" id="GO:0005524">
    <property type="term" value="F:ATP binding"/>
    <property type="evidence" value="ECO:0007669"/>
    <property type="project" value="UniProtKB-KW"/>
</dbReference>
<dbReference type="GO" id="GO:0004349">
    <property type="term" value="F:glutamate 5-kinase activity"/>
    <property type="evidence" value="ECO:0007669"/>
    <property type="project" value="UniProtKB-UniRule"/>
</dbReference>
<dbReference type="GO" id="GO:0055129">
    <property type="term" value="P:L-proline biosynthetic process"/>
    <property type="evidence" value="ECO:0007669"/>
    <property type="project" value="UniProtKB-UniRule"/>
</dbReference>
<dbReference type="CDD" id="cd04242">
    <property type="entry name" value="AAK_G5K_ProB"/>
    <property type="match status" value="1"/>
</dbReference>
<dbReference type="FunFam" id="3.40.1160.10:FF:000006">
    <property type="entry name" value="Glutamate 5-kinase"/>
    <property type="match status" value="1"/>
</dbReference>
<dbReference type="Gene3D" id="3.40.1160.10">
    <property type="entry name" value="Acetylglutamate kinase-like"/>
    <property type="match status" value="1"/>
</dbReference>
<dbReference type="HAMAP" id="MF_00456">
    <property type="entry name" value="ProB"/>
    <property type="match status" value="1"/>
</dbReference>
<dbReference type="InterPro" id="IPR036393">
    <property type="entry name" value="AceGlu_kinase-like_sf"/>
</dbReference>
<dbReference type="InterPro" id="IPR001048">
    <property type="entry name" value="Asp/Glu/Uridylate_kinase"/>
</dbReference>
<dbReference type="InterPro" id="IPR041739">
    <property type="entry name" value="G5K_ProB"/>
</dbReference>
<dbReference type="InterPro" id="IPR001057">
    <property type="entry name" value="Glu/AcGlu_kinase"/>
</dbReference>
<dbReference type="InterPro" id="IPR011529">
    <property type="entry name" value="Glu_5kinase"/>
</dbReference>
<dbReference type="InterPro" id="IPR005715">
    <property type="entry name" value="Glu_5kinase/COase_Synthase"/>
</dbReference>
<dbReference type="InterPro" id="IPR019797">
    <property type="entry name" value="Glutamate_5-kinase_CS"/>
</dbReference>
<dbReference type="NCBIfam" id="TIGR01027">
    <property type="entry name" value="proB"/>
    <property type="match status" value="1"/>
</dbReference>
<dbReference type="PANTHER" id="PTHR43654">
    <property type="entry name" value="GLUTAMATE 5-KINASE"/>
    <property type="match status" value="1"/>
</dbReference>
<dbReference type="PANTHER" id="PTHR43654:SF1">
    <property type="entry name" value="ISOPENTENYL PHOSPHATE KINASE"/>
    <property type="match status" value="1"/>
</dbReference>
<dbReference type="Pfam" id="PF00696">
    <property type="entry name" value="AA_kinase"/>
    <property type="match status" value="1"/>
</dbReference>
<dbReference type="PIRSF" id="PIRSF000729">
    <property type="entry name" value="GK"/>
    <property type="match status" value="1"/>
</dbReference>
<dbReference type="PRINTS" id="PR00474">
    <property type="entry name" value="GLU5KINASE"/>
</dbReference>
<dbReference type="SUPFAM" id="SSF53633">
    <property type="entry name" value="Carbamate kinase-like"/>
    <property type="match status" value="1"/>
</dbReference>
<dbReference type="PROSITE" id="PS00902">
    <property type="entry name" value="GLUTAMATE_5_KINASE"/>
    <property type="match status" value="1"/>
</dbReference>
<reference key="1">
    <citation type="journal article" date="2004" name="J. Infect. Dis.">
        <title>Progress toward characterization of the group A Streptococcus metagenome: complete genome sequence of a macrolide-resistant serotype M6 strain.</title>
        <authorList>
            <person name="Banks D.J."/>
            <person name="Porcella S.F."/>
            <person name="Barbian K.D."/>
            <person name="Beres S.B."/>
            <person name="Philips L.E."/>
            <person name="Voyich J.M."/>
            <person name="DeLeo F.R."/>
            <person name="Martin J.M."/>
            <person name="Somerville G.A."/>
            <person name="Musser J.M."/>
        </authorList>
    </citation>
    <scope>NUCLEOTIDE SEQUENCE [LARGE SCALE GENOMIC DNA]</scope>
    <source>
        <strain>ATCC BAA-946 / MGAS10394</strain>
    </source>
</reference>
<proteinExistence type="inferred from homology"/>
<keyword id="KW-0028">Amino-acid biosynthesis</keyword>
<keyword id="KW-0067">ATP-binding</keyword>
<keyword id="KW-0963">Cytoplasm</keyword>
<keyword id="KW-0418">Kinase</keyword>
<keyword id="KW-0547">Nucleotide-binding</keyword>
<keyword id="KW-0641">Proline biosynthesis</keyword>
<keyword id="KW-0808">Transferase</keyword>
<protein>
    <recommendedName>
        <fullName evidence="1">Glutamate 5-kinase</fullName>
        <ecNumber evidence="1">2.7.2.11</ecNumber>
    </recommendedName>
    <alternativeName>
        <fullName evidence="1">Gamma-glutamyl kinase</fullName>
        <shortName evidence="1">GK</shortName>
    </alternativeName>
</protein>
<name>PROB_STRP6</name>
<evidence type="ECO:0000255" key="1">
    <source>
        <dbReference type="HAMAP-Rule" id="MF_00456"/>
    </source>
</evidence>
<evidence type="ECO:0000305" key="2"/>
<accession>Q5XAK9</accession>
<feature type="chain" id="PRO_0000109736" description="Glutamate 5-kinase">
    <location>
        <begin position="1"/>
        <end position="273"/>
    </location>
</feature>
<feature type="binding site" evidence="1">
    <location>
        <position position="15"/>
    </location>
    <ligand>
        <name>ATP</name>
        <dbReference type="ChEBI" id="CHEBI:30616"/>
    </ligand>
</feature>
<feature type="binding site" evidence="1">
    <location>
        <position position="55"/>
    </location>
    <ligand>
        <name>substrate</name>
    </ligand>
</feature>
<feature type="binding site" evidence="1">
    <location>
        <position position="142"/>
    </location>
    <ligand>
        <name>substrate</name>
    </ligand>
</feature>
<feature type="binding site" evidence="1">
    <location>
        <position position="158"/>
    </location>
    <ligand>
        <name>substrate</name>
    </ligand>
</feature>
<feature type="binding site" evidence="1">
    <location>
        <begin position="178"/>
        <end position="179"/>
    </location>
    <ligand>
        <name>ATP</name>
        <dbReference type="ChEBI" id="CHEBI:30616"/>
    </ligand>
</feature>
<feature type="binding site" evidence="1">
    <location>
        <begin position="220"/>
        <end position="226"/>
    </location>
    <ligand>
        <name>ATP</name>
        <dbReference type="ChEBI" id="CHEBI:30616"/>
    </ligand>
</feature>
<gene>
    <name evidence="1" type="primary">proB</name>
    <name type="ordered locus">M6_Spy1419</name>
</gene>